<keyword id="KW-1003">Cell membrane</keyword>
<keyword id="KW-0378">Hydrolase</keyword>
<keyword id="KW-0472">Membrane</keyword>
<keyword id="KW-0645">Protease</keyword>
<keyword id="KW-0673">Quorum sensing</keyword>
<keyword id="KW-1185">Reference proteome</keyword>
<keyword id="KW-0812">Transmembrane</keyword>
<keyword id="KW-1133">Transmembrane helix</keyword>
<name>AGRB_LISMO</name>
<reference key="1">
    <citation type="journal article" date="2001" name="Science">
        <title>Comparative genomics of Listeria species.</title>
        <authorList>
            <person name="Glaser P."/>
            <person name="Frangeul L."/>
            <person name="Buchrieser C."/>
            <person name="Rusniok C."/>
            <person name="Amend A."/>
            <person name="Baquero F."/>
            <person name="Berche P."/>
            <person name="Bloecker H."/>
            <person name="Brandt P."/>
            <person name="Chakraborty T."/>
            <person name="Charbit A."/>
            <person name="Chetouani F."/>
            <person name="Couve E."/>
            <person name="de Daruvar A."/>
            <person name="Dehoux P."/>
            <person name="Domann E."/>
            <person name="Dominguez-Bernal G."/>
            <person name="Duchaud E."/>
            <person name="Durant L."/>
            <person name="Dussurget O."/>
            <person name="Entian K.-D."/>
            <person name="Fsihi H."/>
            <person name="Garcia-del Portillo F."/>
            <person name="Garrido P."/>
            <person name="Gautier L."/>
            <person name="Goebel W."/>
            <person name="Gomez-Lopez N."/>
            <person name="Hain T."/>
            <person name="Hauf J."/>
            <person name="Jackson D."/>
            <person name="Jones L.-M."/>
            <person name="Kaerst U."/>
            <person name="Kreft J."/>
            <person name="Kuhn M."/>
            <person name="Kunst F."/>
            <person name="Kurapkat G."/>
            <person name="Madueno E."/>
            <person name="Maitournam A."/>
            <person name="Mata Vicente J."/>
            <person name="Ng E."/>
            <person name="Nedjari H."/>
            <person name="Nordsiek G."/>
            <person name="Novella S."/>
            <person name="de Pablos B."/>
            <person name="Perez-Diaz J.-C."/>
            <person name="Purcell R."/>
            <person name="Remmel B."/>
            <person name="Rose M."/>
            <person name="Schlueter T."/>
            <person name="Simoes N."/>
            <person name="Tierrez A."/>
            <person name="Vazquez-Boland J.-A."/>
            <person name="Voss H."/>
            <person name="Wehland J."/>
            <person name="Cossart P."/>
        </authorList>
    </citation>
    <scope>NUCLEOTIDE SEQUENCE [LARGE SCALE GENOMIC DNA]</scope>
    <source>
        <strain>ATCC BAA-679 / EGD-e</strain>
    </source>
</reference>
<evidence type="ECO:0000255" key="1">
    <source>
        <dbReference type="HAMAP-Rule" id="MF_00784"/>
    </source>
</evidence>
<feature type="chain" id="PRO_0000168142" description="Putative AgrB-like protein">
    <location>
        <begin position="1"/>
        <end position="204"/>
    </location>
</feature>
<feature type="transmembrane region" description="Helical" evidence="1">
    <location>
        <begin position="52"/>
        <end position="74"/>
    </location>
</feature>
<feature type="transmembrane region" description="Helical" evidence="1">
    <location>
        <begin position="87"/>
        <end position="107"/>
    </location>
</feature>
<feature type="transmembrane region" description="Helical" evidence="1">
    <location>
        <begin position="111"/>
        <end position="131"/>
    </location>
</feature>
<feature type="transmembrane region" description="Helical" evidence="1">
    <location>
        <begin position="151"/>
        <end position="168"/>
    </location>
</feature>
<feature type="transmembrane region" description="Helical" evidence="1">
    <location>
        <begin position="173"/>
        <end position="190"/>
    </location>
</feature>
<protein>
    <recommendedName>
        <fullName evidence="1">Putative AgrB-like protein</fullName>
        <ecNumber evidence="1">3.4.-.-</ecNumber>
    </recommendedName>
</protein>
<comment type="function">
    <text evidence="1">May be involved in the proteolytic processing of a quorum sensing system signal molecule precursor.</text>
</comment>
<comment type="subcellular location">
    <subcellularLocation>
        <location evidence="1">Cell membrane</location>
        <topology evidence="1">Multi-pass membrane protein</topology>
    </subcellularLocation>
</comment>
<comment type="similarity">
    <text evidence="1">Belongs to the AgrB family.</text>
</comment>
<dbReference type="EC" id="3.4.-.-" evidence="1"/>
<dbReference type="EMBL" id="AL591973">
    <property type="protein sequence ID" value="CAC98263.1"/>
    <property type="molecule type" value="Genomic_DNA"/>
</dbReference>
<dbReference type="PIR" id="AI1080">
    <property type="entry name" value="AI1080"/>
</dbReference>
<dbReference type="RefSeq" id="NP_463581.1">
    <property type="nucleotide sequence ID" value="NC_003210.1"/>
</dbReference>
<dbReference type="RefSeq" id="WP_009932273.1">
    <property type="nucleotide sequence ID" value="NZ_CP149495.1"/>
</dbReference>
<dbReference type="STRING" id="169963.gene:17592683"/>
<dbReference type="PaxDb" id="169963-lmo0048"/>
<dbReference type="EnsemblBacteria" id="CAC98263">
    <property type="protein sequence ID" value="CAC98263"/>
    <property type="gene ID" value="CAC98263"/>
</dbReference>
<dbReference type="GeneID" id="985598"/>
<dbReference type="KEGG" id="lmo:lmo0048"/>
<dbReference type="PATRIC" id="fig|169963.11.peg.49"/>
<dbReference type="eggNOG" id="COG4512">
    <property type="taxonomic scope" value="Bacteria"/>
</dbReference>
<dbReference type="HOGENOM" id="CLU_098969_2_2_9"/>
<dbReference type="OrthoDB" id="2360675at2"/>
<dbReference type="BioCyc" id="LMON169963:LMO0048-MONOMER"/>
<dbReference type="Proteomes" id="UP000000817">
    <property type="component" value="Chromosome"/>
</dbReference>
<dbReference type="GO" id="GO:0005886">
    <property type="term" value="C:plasma membrane"/>
    <property type="evidence" value="ECO:0007669"/>
    <property type="project" value="UniProtKB-SubCell"/>
</dbReference>
<dbReference type="GO" id="GO:0008233">
    <property type="term" value="F:peptidase activity"/>
    <property type="evidence" value="ECO:0007669"/>
    <property type="project" value="UniProtKB-UniRule"/>
</dbReference>
<dbReference type="GO" id="GO:0006508">
    <property type="term" value="P:proteolysis"/>
    <property type="evidence" value="ECO:0007669"/>
    <property type="project" value="UniProtKB-KW"/>
</dbReference>
<dbReference type="GO" id="GO:0009372">
    <property type="term" value="P:quorum sensing"/>
    <property type="evidence" value="ECO:0007669"/>
    <property type="project" value="UniProtKB-UniRule"/>
</dbReference>
<dbReference type="HAMAP" id="MF_00784">
    <property type="entry name" value="AgrB"/>
    <property type="match status" value="1"/>
</dbReference>
<dbReference type="InterPro" id="IPR006741">
    <property type="entry name" value="AgrB"/>
</dbReference>
<dbReference type="NCBIfam" id="NF002210">
    <property type="entry name" value="PRK01100.1"/>
    <property type="match status" value="1"/>
</dbReference>
<dbReference type="Pfam" id="PF04647">
    <property type="entry name" value="AgrB"/>
    <property type="match status" value="1"/>
</dbReference>
<dbReference type="SMART" id="SM00793">
    <property type="entry name" value="AgrB"/>
    <property type="match status" value="1"/>
</dbReference>
<organism>
    <name type="scientific">Listeria monocytogenes serovar 1/2a (strain ATCC BAA-679 / EGD-e)</name>
    <dbReference type="NCBI Taxonomy" id="169963"/>
    <lineage>
        <taxon>Bacteria</taxon>
        <taxon>Bacillati</taxon>
        <taxon>Bacillota</taxon>
        <taxon>Bacilli</taxon>
        <taxon>Bacillales</taxon>
        <taxon>Listeriaceae</taxon>
        <taxon>Listeria</taxon>
    </lineage>
</organism>
<gene>
    <name type="ordered locus">lmo0048</name>
</gene>
<sequence>MSNFTAKVPLSERMADVLISKDRWKDDEEGYLKVKYGLEIILINVMKFALVYGIALVTGLLLQTVTVHLSYLWLRRYSFGLHATKTLNCTLISLLMFVLAPFVFQNIPSNNWIVLGTFGFILLNMFLFAPADTESLPLIGEEHRKTLKRKAMIGTLILTGIALLIPFAEMKTLIMVGSLFQVISINPLTYKLLKRRYRNYEKYE</sequence>
<proteinExistence type="inferred from homology"/>
<accession>Q8YAR6</accession>